<name>Y1680_METJA</name>
<gene>
    <name type="ordered locus">MJ1680</name>
</gene>
<organism>
    <name type="scientific">Methanocaldococcus jannaschii (strain ATCC 43067 / DSM 2661 / JAL-1 / JCM 10045 / NBRC 100440)</name>
    <name type="common">Methanococcus jannaschii</name>
    <dbReference type="NCBI Taxonomy" id="243232"/>
    <lineage>
        <taxon>Archaea</taxon>
        <taxon>Methanobacteriati</taxon>
        <taxon>Methanobacteriota</taxon>
        <taxon>Methanomada group</taxon>
        <taxon>Methanococci</taxon>
        <taxon>Methanococcales</taxon>
        <taxon>Methanocaldococcaceae</taxon>
        <taxon>Methanocaldococcus</taxon>
    </lineage>
</organism>
<reference key="1">
    <citation type="journal article" date="1996" name="Science">
        <title>Complete genome sequence of the methanogenic archaeon, Methanococcus jannaschii.</title>
        <authorList>
            <person name="Bult C.J."/>
            <person name="White O."/>
            <person name="Olsen G.J."/>
            <person name="Zhou L."/>
            <person name="Fleischmann R.D."/>
            <person name="Sutton G.G."/>
            <person name="Blake J.A."/>
            <person name="FitzGerald L.M."/>
            <person name="Clayton R.A."/>
            <person name="Gocayne J.D."/>
            <person name="Kerlavage A.R."/>
            <person name="Dougherty B.A."/>
            <person name="Tomb J.-F."/>
            <person name="Adams M.D."/>
            <person name="Reich C.I."/>
            <person name="Overbeek R."/>
            <person name="Kirkness E.F."/>
            <person name="Weinstock K.G."/>
            <person name="Merrick J.M."/>
            <person name="Glodek A."/>
            <person name="Scott J.L."/>
            <person name="Geoghagen N.S.M."/>
            <person name="Weidman J.F."/>
            <person name="Fuhrmann J.L."/>
            <person name="Nguyen D."/>
            <person name="Utterback T.R."/>
            <person name="Kelley J.M."/>
            <person name="Peterson J.D."/>
            <person name="Sadow P.W."/>
            <person name="Hanna M.C."/>
            <person name="Cotton M.D."/>
            <person name="Roberts K.M."/>
            <person name="Hurst M.A."/>
            <person name="Kaine B.P."/>
            <person name="Borodovsky M."/>
            <person name="Klenk H.-P."/>
            <person name="Fraser C.M."/>
            <person name="Smith H.O."/>
            <person name="Woese C.R."/>
            <person name="Venter J.C."/>
        </authorList>
    </citation>
    <scope>NUCLEOTIDE SEQUENCE [LARGE SCALE GENOMIC DNA]</scope>
    <source>
        <strain>ATCC 43067 / DSM 2661 / JAL-1 / JCM 10045 / NBRC 100440</strain>
    </source>
</reference>
<feature type="chain" id="PRO_0000107480" description="Uncharacterized protein MJ1680">
    <location>
        <begin position="1"/>
        <end position="155"/>
    </location>
</feature>
<proteinExistence type="predicted"/>
<sequence>MEKMEKIKIKVVIDTNVFISALINPNGIPGKILDLIFEEKIVNYTSPSILKEIGFKCLSPKLRKYLGNENRILKILTAFSSVSVIINPNTNFNVCRDEDDNKFINVAYESKAIIITGDKDLISLRDENKYLKINNIHLKVPTPKEFIEEFEKFIS</sequence>
<protein>
    <recommendedName>
        <fullName>Uncharacterized protein MJ1680</fullName>
    </recommendedName>
</protein>
<keyword id="KW-1185">Reference proteome</keyword>
<accession>Q59074</accession>
<dbReference type="EMBL" id="L77117">
    <property type="protein sequence ID" value="AAB99701.1"/>
    <property type="molecule type" value="Genomic_DNA"/>
</dbReference>
<dbReference type="PIR" id="F64509">
    <property type="entry name" value="F64509"/>
</dbReference>
<dbReference type="STRING" id="243232.MJ_1680"/>
<dbReference type="PaxDb" id="243232-MJ_1680"/>
<dbReference type="EnsemblBacteria" id="AAB99701">
    <property type="protein sequence ID" value="AAB99701"/>
    <property type="gene ID" value="MJ_1680"/>
</dbReference>
<dbReference type="KEGG" id="mja:MJ_1680"/>
<dbReference type="eggNOG" id="arCOG02120">
    <property type="taxonomic scope" value="Archaea"/>
</dbReference>
<dbReference type="HOGENOM" id="CLU_116617_1_0_2"/>
<dbReference type="InParanoid" id="Q59074"/>
<dbReference type="PhylomeDB" id="Q59074"/>
<dbReference type="Proteomes" id="UP000000805">
    <property type="component" value="Chromosome"/>
</dbReference>
<dbReference type="Gene3D" id="3.40.50.1010">
    <property type="entry name" value="5'-nuclease"/>
    <property type="match status" value="1"/>
</dbReference>
<dbReference type="InterPro" id="IPR029060">
    <property type="entry name" value="PIN-like_dom_sf"/>
</dbReference>
<dbReference type="InterPro" id="IPR002716">
    <property type="entry name" value="PIN_dom"/>
</dbReference>
<dbReference type="InterPro" id="IPR002850">
    <property type="entry name" value="PIN_toxin-like"/>
</dbReference>
<dbReference type="NCBIfam" id="TIGR00305">
    <property type="entry name" value="putative toxin-antitoxin system toxin component, PIN family"/>
    <property type="match status" value="1"/>
</dbReference>
<dbReference type="PANTHER" id="PTHR34610">
    <property type="entry name" value="SSL7007 PROTEIN"/>
    <property type="match status" value="1"/>
</dbReference>
<dbReference type="PANTHER" id="PTHR34610:SF3">
    <property type="entry name" value="SSL7007 PROTEIN"/>
    <property type="match status" value="1"/>
</dbReference>
<dbReference type="Pfam" id="PF13470">
    <property type="entry name" value="PIN_3"/>
    <property type="match status" value="1"/>
</dbReference>
<dbReference type="SMART" id="SM00670">
    <property type="entry name" value="PINc"/>
    <property type="match status" value="1"/>
</dbReference>
<dbReference type="SUPFAM" id="SSF88723">
    <property type="entry name" value="PIN domain-like"/>
    <property type="match status" value="1"/>
</dbReference>